<reference key="1">
    <citation type="journal article" date="2006" name="PLoS Biol.">
        <title>The genome of deep-sea vent chemolithoautotroph Thiomicrospira crunogena XCL-2.</title>
        <authorList>
            <person name="Scott K.M."/>
            <person name="Sievert S.M."/>
            <person name="Abril F.N."/>
            <person name="Ball L.A."/>
            <person name="Barrett C.J."/>
            <person name="Blake R.A."/>
            <person name="Boller A.J."/>
            <person name="Chain P.S.G."/>
            <person name="Clark J.A."/>
            <person name="Davis C.R."/>
            <person name="Detter C."/>
            <person name="Do K.F."/>
            <person name="Dobrinski K.P."/>
            <person name="Faza B.I."/>
            <person name="Fitzpatrick K.A."/>
            <person name="Freyermuth S.K."/>
            <person name="Harmer T.L."/>
            <person name="Hauser L.J."/>
            <person name="Huegler M."/>
            <person name="Kerfeld C.A."/>
            <person name="Klotz M.G."/>
            <person name="Kong W.W."/>
            <person name="Land M."/>
            <person name="Lapidus A."/>
            <person name="Larimer F.W."/>
            <person name="Longo D.L."/>
            <person name="Lucas S."/>
            <person name="Malfatti S.A."/>
            <person name="Massey S.E."/>
            <person name="Martin D.D."/>
            <person name="McCuddin Z."/>
            <person name="Meyer F."/>
            <person name="Moore J.L."/>
            <person name="Ocampo L.H. Jr."/>
            <person name="Paul J.H."/>
            <person name="Paulsen I.T."/>
            <person name="Reep D.K."/>
            <person name="Ren Q."/>
            <person name="Ross R.L."/>
            <person name="Sato P.Y."/>
            <person name="Thomas P."/>
            <person name="Tinkham L.E."/>
            <person name="Zeruth G.T."/>
        </authorList>
    </citation>
    <scope>NUCLEOTIDE SEQUENCE [LARGE SCALE GENOMIC DNA]</scope>
    <source>
        <strain>DSM 25203 / XCL-2</strain>
    </source>
</reference>
<gene>
    <name evidence="1" type="primary">dnaK</name>
    <name type="ordered locus">Tcr_0870</name>
</gene>
<evidence type="ECO:0000255" key="1">
    <source>
        <dbReference type="HAMAP-Rule" id="MF_00332"/>
    </source>
</evidence>
<evidence type="ECO:0000256" key="2">
    <source>
        <dbReference type="SAM" id="MobiDB-lite"/>
    </source>
</evidence>
<accession>Q31HA7</accession>
<keyword id="KW-0067">ATP-binding</keyword>
<keyword id="KW-0143">Chaperone</keyword>
<keyword id="KW-0547">Nucleotide-binding</keyword>
<keyword id="KW-0597">Phosphoprotein</keyword>
<keyword id="KW-0346">Stress response</keyword>
<sequence>MGKIIGIDLGTTNSCVAVMEGKETKVIPNAEGARTTPSIVAYADDGEVLVGDSAKRQAVTNPENTLFAIKRLIGRRADDAVVEKDKDMVSYKIIAADNGDAWVQVGDKKLSPQEVSARTLMKMKKTAEDYLGHEVTEAVITVPAYFNDSQRQATKDAGKIAGLEVKRIINEPTAAALAYGMDKVKADSKIAVYDLGGGTFDISIIEVADLDGEKQVEVLSTNGDTFLGGEDFDNVIVDYIATEFKKDQNVDLKLDKLALQRVREAAEKAKIELSSREQTDINLPYVTADATGPKHLNMKITRAKFESLIEGLVQRSIDPCKTALKDAGLSASEIDDVILVGGSTRVPMVQAAVKEFFGKEPRKDVNPDEAVAMGAAIQGGVLSGDVNDVLLLDVTPLSLGIETMGGVMTKLIEKNTTIPTRKSQTFSTAEDNQSAVTIHVLQGEREVSSGNKSLGQFNLDEIPPAPRGTPQIEVTFDIDANGILNVSAKDKATNKEQHITIQASSGLSEDEIEAMVKDAEAHAAEDAKLKELVEARNQADAMVHGTKKLLDEQGEGVEAAEKEAIEKAIADLEEAIKGDDKAVIDEKTQALATASQKLAEKAYAQPGAEAGAEQQGSANNADDDIVDAEFEEVNDDKK</sequence>
<name>DNAK_HYDCU</name>
<feature type="chain" id="PRO_1000059693" description="Chaperone protein DnaK">
    <location>
        <begin position="1"/>
        <end position="638"/>
    </location>
</feature>
<feature type="region of interest" description="Disordered" evidence="2">
    <location>
        <begin position="603"/>
        <end position="638"/>
    </location>
</feature>
<feature type="compositionally biased region" description="Low complexity" evidence="2">
    <location>
        <begin position="603"/>
        <end position="618"/>
    </location>
</feature>
<feature type="compositionally biased region" description="Acidic residues" evidence="2">
    <location>
        <begin position="621"/>
        <end position="638"/>
    </location>
</feature>
<feature type="modified residue" description="Phosphothreonine; by autocatalysis" evidence="1">
    <location>
        <position position="199"/>
    </location>
</feature>
<protein>
    <recommendedName>
        <fullName evidence="1">Chaperone protein DnaK</fullName>
    </recommendedName>
    <alternativeName>
        <fullName evidence="1">HSP70</fullName>
    </alternativeName>
    <alternativeName>
        <fullName evidence="1">Heat shock 70 kDa protein</fullName>
    </alternativeName>
    <alternativeName>
        <fullName evidence="1">Heat shock protein 70</fullName>
    </alternativeName>
</protein>
<comment type="function">
    <text evidence="1">Acts as a chaperone.</text>
</comment>
<comment type="induction">
    <text evidence="1">By stress conditions e.g. heat shock.</text>
</comment>
<comment type="similarity">
    <text evidence="1">Belongs to the heat shock protein 70 family.</text>
</comment>
<dbReference type="EMBL" id="CP000109">
    <property type="protein sequence ID" value="ABB41466.1"/>
    <property type="molecule type" value="Genomic_DNA"/>
</dbReference>
<dbReference type="SMR" id="Q31HA7"/>
<dbReference type="STRING" id="317025.Tcr_0870"/>
<dbReference type="KEGG" id="tcx:Tcr_0870"/>
<dbReference type="eggNOG" id="COG0443">
    <property type="taxonomic scope" value="Bacteria"/>
</dbReference>
<dbReference type="HOGENOM" id="CLU_005965_2_1_6"/>
<dbReference type="OrthoDB" id="9766019at2"/>
<dbReference type="GO" id="GO:0005524">
    <property type="term" value="F:ATP binding"/>
    <property type="evidence" value="ECO:0007669"/>
    <property type="project" value="UniProtKB-UniRule"/>
</dbReference>
<dbReference type="GO" id="GO:0140662">
    <property type="term" value="F:ATP-dependent protein folding chaperone"/>
    <property type="evidence" value="ECO:0007669"/>
    <property type="project" value="InterPro"/>
</dbReference>
<dbReference type="GO" id="GO:0051082">
    <property type="term" value="F:unfolded protein binding"/>
    <property type="evidence" value="ECO:0007669"/>
    <property type="project" value="InterPro"/>
</dbReference>
<dbReference type="CDD" id="cd10234">
    <property type="entry name" value="ASKHA_NBD_HSP70_DnaK-like"/>
    <property type="match status" value="1"/>
</dbReference>
<dbReference type="FunFam" id="2.60.34.10:FF:000014">
    <property type="entry name" value="Chaperone protein DnaK HSP70"/>
    <property type="match status" value="1"/>
</dbReference>
<dbReference type="FunFam" id="3.30.30.30:FF:000003">
    <property type="entry name" value="Heat shock protein 9"/>
    <property type="match status" value="1"/>
</dbReference>
<dbReference type="FunFam" id="1.20.1270.10:FF:000001">
    <property type="entry name" value="Molecular chaperone DnaK"/>
    <property type="match status" value="1"/>
</dbReference>
<dbReference type="FunFam" id="3.30.420.40:FF:000004">
    <property type="entry name" value="Molecular chaperone DnaK"/>
    <property type="match status" value="1"/>
</dbReference>
<dbReference type="FunFam" id="3.90.640.10:FF:000003">
    <property type="entry name" value="Molecular chaperone DnaK"/>
    <property type="match status" value="1"/>
</dbReference>
<dbReference type="Gene3D" id="1.20.1270.10">
    <property type="match status" value="1"/>
</dbReference>
<dbReference type="Gene3D" id="3.30.420.40">
    <property type="match status" value="2"/>
</dbReference>
<dbReference type="Gene3D" id="3.90.640.10">
    <property type="entry name" value="Actin, Chain A, domain 4"/>
    <property type="match status" value="1"/>
</dbReference>
<dbReference type="Gene3D" id="2.60.34.10">
    <property type="entry name" value="Substrate Binding Domain Of DNAk, Chain A, domain 1"/>
    <property type="match status" value="1"/>
</dbReference>
<dbReference type="HAMAP" id="MF_00332">
    <property type="entry name" value="DnaK"/>
    <property type="match status" value="1"/>
</dbReference>
<dbReference type="InterPro" id="IPR043129">
    <property type="entry name" value="ATPase_NBD"/>
</dbReference>
<dbReference type="InterPro" id="IPR012725">
    <property type="entry name" value="Chaperone_DnaK"/>
</dbReference>
<dbReference type="InterPro" id="IPR018181">
    <property type="entry name" value="Heat_shock_70_CS"/>
</dbReference>
<dbReference type="InterPro" id="IPR029048">
    <property type="entry name" value="HSP70_C_sf"/>
</dbReference>
<dbReference type="InterPro" id="IPR029047">
    <property type="entry name" value="HSP70_peptide-bd_sf"/>
</dbReference>
<dbReference type="InterPro" id="IPR013126">
    <property type="entry name" value="Hsp_70_fam"/>
</dbReference>
<dbReference type="NCBIfam" id="NF001413">
    <property type="entry name" value="PRK00290.1"/>
    <property type="match status" value="1"/>
</dbReference>
<dbReference type="NCBIfam" id="NF003520">
    <property type="entry name" value="PRK05183.1"/>
    <property type="match status" value="1"/>
</dbReference>
<dbReference type="NCBIfam" id="TIGR02350">
    <property type="entry name" value="prok_dnaK"/>
    <property type="match status" value="1"/>
</dbReference>
<dbReference type="PANTHER" id="PTHR19375">
    <property type="entry name" value="HEAT SHOCK PROTEIN 70KDA"/>
    <property type="match status" value="1"/>
</dbReference>
<dbReference type="Pfam" id="PF00012">
    <property type="entry name" value="HSP70"/>
    <property type="match status" value="1"/>
</dbReference>
<dbReference type="PRINTS" id="PR00301">
    <property type="entry name" value="HEATSHOCK70"/>
</dbReference>
<dbReference type="SUPFAM" id="SSF53067">
    <property type="entry name" value="Actin-like ATPase domain"/>
    <property type="match status" value="2"/>
</dbReference>
<dbReference type="SUPFAM" id="SSF100934">
    <property type="entry name" value="Heat shock protein 70kD (HSP70), C-terminal subdomain"/>
    <property type="match status" value="1"/>
</dbReference>
<dbReference type="SUPFAM" id="SSF100920">
    <property type="entry name" value="Heat shock protein 70kD (HSP70), peptide-binding domain"/>
    <property type="match status" value="1"/>
</dbReference>
<dbReference type="PROSITE" id="PS00297">
    <property type="entry name" value="HSP70_1"/>
    <property type="match status" value="1"/>
</dbReference>
<dbReference type="PROSITE" id="PS00329">
    <property type="entry name" value="HSP70_2"/>
    <property type="match status" value="1"/>
</dbReference>
<dbReference type="PROSITE" id="PS01036">
    <property type="entry name" value="HSP70_3"/>
    <property type="match status" value="1"/>
</dbReference>
<proteinExistence type="inferred from homology"/>
<organism>
    <name type="scientific">Hydrogenovibrio crunogenus (strain DSM 25203 / XCL-2)</name>
    <name type="common">Thiomicrospira crunogena</name>
    <dbReference type="NCBI Taxonomy" id="317025"/>
    <lineage>
        <taxon>Bacteria</taxon>
        <taxon>Pseudomonadati</taxon>
        <taxon>Pseudomonadota</taxon>
        <taxon>Gammaproteobacteria</taxon>
        <taxon>Thiotrichales</taxon>
        <taxon>Piscirickettsiaceae</taxon>
        <taxon>Hydrogenovibrio</taxon>
    </lineage>
</organism>